<keyword id="KW-0963">Cytoplasm</keyword>
<keyword id="KW-0251">Elongation factor</keyword>
<keyword id="KW-0342">GTP-binding</keyword>
<keyword id="KW-0547">Nucleotide-binding</keyword>
<keyword id="KW-0648">Protein biosynthesis</keyword>
<dbReference type="EMBL" id="CP001056">
    <property type="protein sequence ID" value="ACD22465.1"/>
    <property type="molecule type" value="Genomic_DNA"/>
</dbReference>
<dbReference type="SMR" id="B2TIH2"/>
<dbReference type="KEGG" id="cbk:CLL_A0235"/>
<dbReference type="PATRIC" id="fig|935198.13.peg.209"/>
<dbReference type="HOGENOM" id="CLU_002794_4_1_9"/>
<dbReference type="Proteomes" id="UP000001195">
    <property type="component" value="Chromosome"/>
</dbReference>
<dbReference type="GO" id="GO:0005737">
    <property type="term" value="C:cytoplasm"/>
    <property type="evidence" value="ECO:0007669"/>
    <property type="project" value="UniProtKB-SubCell"/>
</dbReference>
<dbReference type="GO" id="GO:0005525">
    <property type="term" value="F:GTP binding"/>
    <property type="evidence" value="ECO:0007669"/>
    <property type="project" value="UniProtKB-UniRule"/>
</dbReference>
<dbReference type="GO" id="GO:0003924">
    <property type="term" value="F:GTPase activity"/>
    <property type="evidence" value="ECO:0007669"/>
    <property type="project" value="InterPro"/>
</dbReference>
<dbReference type="GO" id="GO:0003746">
    <property type="term" value="F:translation elongation factor activity"/>
    <property type="evidence" value="ECO:0007669"/>
    <property type="project" value="UniProtKB-UniRule"/>
</dbReference>
<dbReference type="GO" id="GO:0032790">
    <property type="term" value="P:ribosome disassembly"/>
    <property type="evidence" value="ECO:0007669"/>
    <property type="project" value="TreeGrafter"/>
</dbReference>
<dbReference type="CDD" id="cd01886">
    <property type="entry name" value="EF-G"/>
    <property type="match status" value="1"/>
</dbReference>
<dbReference type="CDD" id="cd16262">
    <property type="entry name" value="EFG_III"/>
    <property type="match status" value="1"/>
</dbReference>
<dbReference type="CDD" id="cd01434">
    <property type="entry name" value="EFG_mtEFG1_IV"/>
    <property type="match status" value="1"/>
</dbReference>
<dbReference type="CDD" id="cd03713">
    <property type="entry name" value="EFG_mtEFG_C"/>
    <property type="match status" value="1"/>
</dbReference>
<dbReference type="CDD" id="cd04088">
    <property type="entry name" value="EFG_mtEFG_II"/>
    <property type="match status" value="1"/>
</dbReference>
<dbReference type="FunFam" id="2.40.30.10:FF:000006">
    <property type="entry name" value="Elongation factor G"/>
    <property type="match status" value="1"/>
</dbReference>
<dbReference type="FunFam" id="3.30.230.10:FF:000003">
    <property type="entry name" value="Elongation factor G"/>
    <property type="match status" value="1"/>
</dbReference>
<dbReference type="FunFam" id="3.30.70.240:FF:000001">
    <property type="entry name" value="Elongation factor G"/>
    <property type="match status" value="1"/>
</dbReference>
<dbReference type="FunFam" id="3.30.70.870:FF:000001">
    <property type="entry name" value="Elongation factor G"/>
    <property type="match status" value="1"/>
</dbReference>
<dbReference type="FunFam" id="3.40.50.300:FF:000029">
    <property type="entry name" value="Elongation factor G"/>
    <property type="match status" value="1"/>
</dbReference>
<dbReference type="Gene3D" id="3.30.230.10">
    <property type="match status" value="1"/>
</dbReference>
<dbReference type="Gene3D" id="3.30.70.240">
    <property type="match status" value="1"/>
</dbReference>
<dbReference type="Gene3D" id="3.30.70.870">
    <property type="entry name" value="Elongation Factor G (Translational Gtpase), domain 3"/>
    <property type="match status" value="1"/>
</dbReference>
<dbReference type="Gene3D" id="3.40.50.300">
    <property type="entry name" value="P-loop containing nucleotide triphosphate hydrolases"/>
    <property type="match status" value="1"/>
</dbReference>
<dbReference type="Gene3D" id="2.40.30.10">
    <property type="entry name" value="Translation factors"/>
    <property type="match status" value="1"/>
</dbReference>
<dbReference type="HAMAP" id="MF_00054_B">
    <property type="entry name" value="EF_G_EF_2_B"/>
    <property type="match status" value="1"/>
</dbReference>
<dbReference type="InterPro" id="IPR053905">
    <property type="entry name" value="EF-G-like_DII"/>
</dbReference>
<dbReference type="InterPro" id="IPR041095">
    <property type="entry name" value="EFG_II"/>
</dbReference>
<dbReference type="InterPro" id="IPR009022">
    <property type="entry name" value="EFG_III"/>
</dbReference>
<dbReference type="InterPro" id="IPR035647">
    <property type="entry name" value="EFG_III/V"/>
</dbReference>
<dbReference type="InterPro" id="IPR047872">
    <property type="entry name" value="EFG_IV"/>
</dbReference>
<dbReference type="InterPro" id="IPR035649">
    <property type="entry name" value="EFG_V"/>
</dbReference>
<dbReference type="InterPro" id="IPR000640">
    <property type="entry name" value="EFG_V-like"/>
</dbReference>
<dbReference type="InterPro" id="IPR031157">
    <property type="entry name" value="G_TR_CS"/>
</dbReference>
<dbReference type="InterPro" id="IPR027417">
    <property type="entry name" value="P-loop_NTPase"/>
</dbReference>
<dbReference type="InterPro" id="IPR020568">
    <property type="entry name" value="Ribosomal_Su5_D2-typ_SF"/>
</dbReference>
<dbReference type="InterPro" id="IPR014721">
    <property type="entry name" value="Ribsml_uS5_D2-typ_fold_subgr"/>
</dbReference>
<dbReference type="InterPro" id="IPR005225">
    <property type="entry name" value="Small_GTP-bd"/>
</dbReference>
<dbReference type="InterPro" id="IPR000795">
    <property type="entry name" value="T_Tr_GTP-bd_dom"/>
</dbReference>
<dbReference type="InterPro" id="IPR009000">
    <property type="entry name" value="Transl_B-barrel_sf"/>
</dbReference>
<dbReference type="InterPro" id="IPR004540">
    <property type="entry name" value="Transl_elong_EFG/EF2"/>
</dbReference>
<dbReference type="InterPro" id="IPR005517">
    <property type="entry name" value="Transl_elong_EFG/EF2_IV"/>
</dbReference>
<dbReference type="NCBIfam" id="TIGR00484">
    <property type="entry name" value="EF-G"/>
    <property type="match status" value="1"/>
</dbReference>
<dbReference type="NCBIfam" id="NF009381">
    <property type="entry name" value="PRK12740.1-5"/>
    <property type="match status" value="1"/>
</dbReference>
<dbReference type="NCBIfam" id="TIGR00231">
    <property type="entry name" value="small_GTP"/>
    <property type="match status" value="1"/>
</dbReference>
<dbReference type="PANTHER" id="PTHR43261:SF1">
    <property type="entry name" value="RIBOSOME-RELEASING FACTOR 2, MITOCHONDRIAL"/>
    <property type="match status" value="1"/>
</dbReference>
<dbReference type="PANTHER" id="PTHR43261">
    <property type="entry name" value="TRANSLATION ELONGATION FACTOR G-RELATED"/>
    <property type="match status" value="1"/>
</dbReference>
<dbReference type="Pfam" id="PF22042">
    <property type="entry name" value="EF-G_D2"/>
    <property type="match status" value="1"/>
</dbReference>
<dbReference type="Pfam" id="PF00679">
    <property type="entry name" value="EFG_C"/>
    <property type="match status" value="1"/>
</dbReference>
<dbReference type="Pfam" id="PF14492">
    <property type="entry name" value="EFG_III"/>
    <property type="match status" value="1"/>
</dbReference>
<dbReference type="Pfam" id="PF03764">
    <property type="entry name" value="EFG_IV"/>
    <property type="match status" value="1"/>
</dbReference>
<dbReference type="Pfam" id="PF00009">
    <property type="entry name" value="GTP_EFTU"/>
    <property type="match status" value="1"/>
</dbReference>
<dbReference type="PRINTS" id="PR00315">
    <property type="entry name" value="ELONGATNFCT"/>
</dbReference>
<dbReference type="SMART" id="SM00838">
    <property type="entry name" value="EFG_C"/>
    <property type="match status" value="1"/>
</dbReference>
<dbReference type="SMART" id="SM00889">
    <property type="entry name" value="EFG_IV"/>
    <property type="match status" value="1"/>
</dbReference>
<dbReference type="SUPFAM" id="SSF54980">
    <property type="entry name" value="EF-G C-terminal domain-like"/>
    <property type="match status" value="2"/>
</dbReference>
<dbReference type="SUPFAM" id="SSF52540">
    <property type="entry name" value="P-loop containing nucleoside triphosphate hydrolases"/>
    <property type="match status" value="1"/>
</dbReference>
<dbReference type="SUPFAM" id="SSF54211">
    <property type="entry name" value="Ribosomal protein S5 domain 2-like"/>
    <property type="match status" value="1"/>
</dbReference>
<dbReference type="SUPFAM" id="SSF50447">
    <property type="entry name" value="Translation proteins"/>
    <property type="match status" value="1"/>
</dbReference>
<dbReference type="PROSITE" id="PS00301">
    <property type="entry name" value="G_TR_1"/>
    <property type="match status" value="1"/>
</dbReference>
<dbReference type="PROSITE" id="PS51722">
    <property type="entry name" value="G_TR_2"/>
    <property type="match status" value="1"/>
</dbReference>
<accession>B2TIH2</accession>
<comment type="function">
    <text evidence="1">Catalyzes the GTP-dependent ribosomal translocation step during translation elongation. During this step, the ribosome changes from the pre-translocational (PRE) to the post-translocational (POST) state as the newly formed A-site-bound peptidyl-tRNA and P-site-bound deacylated tRNA move to the P and E sites, respectively. Catalyzes the coordinated movement of the two tRNA molecules, the mRNA and conformational changes in the ribosome.</text>
</comment>
<comment type="subcellular location">
    <subcellularLocation>
        <location evidence="1">Cytoplasm</location>
    </subcellularLocation>
</comment>
<comment type="similarity">
    <text evidence="1">Belongs to the TRAFAC class translation factor GTPase superfamily. Classic translation factor GTPase family. EF-G/EF-2 subfamily.</text>
</comment>
<proteinExistence type="inferred from homology"/>
<evidence type="ECO:0000255" key="1">
    <source>
        <dbReference type="HAMAP-Rule" id="MF_00054"/>
    </source>
</evidence>
<organism>
    <name type="scientific">Clostridium botulinum (strain Eklund 17B / Type B)</name>
    <dbReference type="NCBI Taxonomy" id="935198"/>
    <lineage>
        <taxon>Bacteria</taxon>
        <taxon>Bacillati</taxon>
        <taxon>Bacillota</taxon>
        <taxon>Clostridia</taxon>
        <taxon>Eubacteriales</taxon>
        <taxon>Clostridiaceae</taxon>
        <taxon>Clostridium</taxon>
    </lineage>
</organism>
<reference key="1">
    <citation type="submission" date="2008-04" db="EMBL/GenBank/DDBJ databases">
        <title>Complete sequence of Clostridium botulinum strain Eklund.</title>
        <authorList>
            <person name="Brinkac L.M."/>
            <person name="Brown J.L."/>
            <person name="Bruce D."/>
            <person name="Detter C."/>
            <person name="Munk C."/>
            <person name="Smith L.A."/>
            <person name="Smith T.J."/>
            <person name="Sutton G."/>
            <person name="Brettin T.S."/>
        </authorList>
    </citation>
    <scope>NUCLEOTIDE SEQUENCE [LARGE SCALE GENOMIC DNA]</scope>
    <source>
        <strain>Eklund 17B / Type B</strain>
    </source>
</reference>
<gene>
    <name evidence="1" type="primary">fusA</name>
    <name type="ordered locus">CLL_A0235</name>
</gene>
<name>EFG_CLOBB</name>
<protein>
    <recommendedName>
        <fullName evidence="1">Elongation factor G</fullName>
        <shortName evidence="1">EF-G</shortName>
    </recommendedName>
</protein>
<feature type="chain" id="PRO_1000091702" description="Elongation factor G">
    <location>
        <begin position="1"/>
        <end position="688"/>
    </location>
</feature>
<feature type="domain" description="tr-type G">
    <location>
        <begin position="8"/>
        <end position="282"/>
    </location>
</feature>
<feature type="binding site" evidence="1">
    <location>
        <begin position="17"/>
        <end position="24"/>
    </location>
    <ligand>
        <name>GTP</name>
        <dbReference type="ChEBI" id="CHEBI:37565"/>
    </ligand>
</feature>
<feature type="binding site" evidence="1">
    <location>
        <begin position="81"/>
        <end position="85"/>
    </location>
    <ligand>
        <name>GTP</name>
        <dbReference type="ChEBI" id="CHEBI:37565"/>
    </ligand>
</feature>
<feature type="binding site" evidence="1">
    <location>
        <begin position="135"/>
        <end position="138"/>
    </location>
    <ligand>
        <name>GTP</name>
        <dbReference type="ChEBI" id="CHEBI:37565"/>
    </ligand>
</feature>
<sequence>MARKYPLDKFRNFGIMAHIDAGKTTTTERILFYTGINHKIGETHDGASTMDWMVQEQERGITITSAATTCAWKEHELNIIDTPGHVDFTVEVERSLRVLDGAVTVLDAKSGVEPQTETVWRQADKYGVPRMIYVNKMDATGADFFRCISTVRDRLKGNAVPIQIPIGSEENFQGMIDLIRNVAILFYDDLGKDMREEAIPAEYAEKAEEYRAAMIEAIAEADEELMMKYLEGEEITEEELKAGLRKATIANEIYPCICGSSYKNKGVQQMIDGVVDYLPSPLDIPAVKGTNLEGEEAERNAADGEPLSALAFKIATDPFVGKLAYTRIYSGIMESGSYVLNSTKGKKERIGRLVKMHSNSRQEVESLEAGELGAVIGLKNTGTGDTLCSEKDPIILESMEFPEPVISVAIEPKTKAAQEKMGMALAKLAEEDPTFKTWTNEETGQTIIAGMGELHLDIIVDRLKREFKVECNVGAPQVAYKETIRKAVKAEAKYAKQSGGKGQYGHAVIEMEPTEGEYVFENAIVGGAIPREYIPAVDNGIQEASLNGIIAGYNVINFKVRLVHGSYHEVDSSEMAFKIAGSMAFKNAMAKADPVLLEPVEKVEITVPEEYMGDVIGDVNSRRGRMEGMEEVSGAQVIRAFVPLSEMFGYATSLRSRTQGRGVYSMVFDHYEEVPKSIQEEVAGNKTK</sequence>